<reference evidence="4" key="1">
    <citation type="journal article" date="2007" name="Nature">
        <title>Evolution of genes and genomes on the Drosophila phylogeny.</title>
        <authorList>
            <consortium name="Drosophila 12 genomes consortium"/>
        </authorList>
    </citation>
    <scope>NUCLEOTIDE SEQUENCE [LARGE SCALE GENOMIC DNA]</scope>
</reference>
<dbReference type="EMBL" id="CM000363">
    <property type="protein sequence ID" value="EDX09301.1"/>
    <property type="molecule type" value="Genomic_DNA"/>
</dbReference>
<dbReference type="SMR" id="B4QRJ0"/>
<dbReference type="STRING" id="7240.B4QRJ0"/>
<dbReference type="HOGENOM" id="CLU_016278_1_0_1"/>
<dbReference type="OMA" id="FESPACA"/>
<dbReference type="OrthoDB" id="271725at2759"/>
<dbReference type="PhylomeDB" id="B4QRJ0"/>
<dbReference type="Proteomes" id="UP000000304">
    <property type="component" value="Chromosome 3L"/>
</dbReference>
<dbReference type="GO" id="GO:1990904">
    <property type="term" value="C:ribonucleoprotein complex"/>
    <property type="evidence" value="ECO:0007669"/>
    <property type="project" value="InterPro"/>
</dbReference>
<dbReference type="GO" id="GO:0003723">
    <property type="term" value="F:RNA binding"/>
    <property type="evidence" value="ECO:0007669"/>
    <property type="project" value="UniProtKB-KW"/>
</dbReference>
<dbReference type="GO" id="GO:0009629">
    <property type="term" value="P:response to gravity"/>
    <property type="evidence" value="ECO:0000250"/>
    <property type="project" value="UniProtKB"/>
</dbReference>
<dbReference type="CDD" id="cd12244">
    <property type="entry name" value="RRM2_MSSP"/>
    <property type="match status" value="1"/>
</dbReference>
<dbReference type="FunFam" id="3.30.70.330:FF:000169">
    <property type="entry name" value="protein alan shepard isoform X4"/>
    <property type="match status" value="1"/>
</dbReference>
<dbReference type="FunFam" id="3.30.70.330:FF:000491">
    <property type="entry name" value="protein alan shepard isoform X6"/>
    <property type="match status" value="1"/>
</dbReference>
<dbReference type="Gene3D" id="3.30.70.330">
    <property type="match status" value="2"/>
</dbReference>
<dbReference type="InterPro" id="IPR002343">
    <property type="entry name" value="Hud_Sxl_RNA"/>
</dbReference>
<dbReference type="InterPro" id="IPR012677">
    <property type="entry name" value="Nucleotide-bd_a/b_plait_sf"/>
</dbReference>
<dbReference type="InterPro" id="IPR035979">
    <property type="entry name" value="RBD_domain_sf"/>
</dbReference>
<dbReference type="InterPro" id="IPR000504">
    <property type="entry name" value="RRM_dom"/>
</dbReference>
<dbReference type="PANTHER" id="PTHR24012">
    <property type="entry name" value="RNA BINDING PROTEIN"/>
    <property type="match status" value="1"/>
</dbReference>
<dbReference type="Pfam" id="PF00076">
    <property type="entry name" value="RRM_1"/>
    <property type="match status" value="2"/>
</dbReference>
<dbReference type="PRINTS" id="PR00961">
    <property type="entry name" value="HUDSXLRNA"/>
</dbReference>
<dbReference type="SMART" id="SM00360">
    <property type="entry name" value="RRM"/>
    <property type="match status" value="2"/>
</dbReference>
<dbReference type="SUPFAM" id="SSF54928">
    <property type="entry name" value="RNA-binding domain, RBD"/>
    <property type="match status" value="2"/>
</dbReference>
<dbReference type="PROSITE" id="PS50102">
    <property type="entry name" value="RRM"/>
    <property type="match status" value="2"/>
</dbReference>
<proteinExistence type="inferred from homology"/>
<accession>B4QRJ0</accession>
<organism>
    <name type="scientific">Drosophila simulans</name>
    <name type="common">Fruit fly</name>
    <dbReference type="NCBI Taxonomy" id="7240"/>
    <lineage>
        <taxon>Eukaryota</taxon>
        <taxon>Metazoa</taxon>
        <taxon>Ecdysozoa</taxon>
        <taxon>Arthropoda</taxon>
        <taxon>Hexapoda</taxon>
        <taxon>Insecta</taxon>
        <taxon>Pterygota</taxon>
        <taxon>Neoptera</taxon>
        <taxon>Endopterygota</taxon>
        <taxon>Diptera</taxon>
        <taxon>Brachycera</taxon>
        <taxon>Muscomorpha</taxon>
        <taxon>Ephydroidea</taxon>
        <taxon>Drosophilidae</taxon>
        <taxon>Drosophila</taxon>
        <taxon>Sophophora</taxon>
    </lineage>
</organism>
<evidence type="ECO:0000250" key="1">
    <source>
        <dbReference type="UniProtKB" id="Q8MSV2"/>
    </source>
</evidence>
<evidence type="ECO:0000255" key="2">
    <source>
        <dbReference type="PROSITE-ProRule" id="PRU00176"/>
    </source>
</evidence>
<evidence type="ECO:0000256" key="3">
    <source>
        <dbReference type="SAM" id="MobiDB-lite"/>
    </source>
</evidence>
<evidence type="ECO:0000312" key="4">
    <source>
        <dbReference type="EMBL" id="EDX09301.1"/>
    </source>
</evidence>
<feature type="chain" id="PRO_0000379502" description="Protein alan shepard">
    <location>
        <begin position="1"/>
        <end position="576"/>
    </location>
</feature>
<feature type="domain" description="RRM 1" evidence="2">
    <location>
        <begin position="231"/>
        <end position="302"/>
    </location>
</feature>
<feature type="domain" description="RRM 2" evidence="2">
    <location>
        <begin position="308"/>
        <end position="387"/>
    </location>
</feature>
<feature type="region of interest" description="Disordered" evidence="3">
    <location>
        <begin position="1"/>
        <end position="66"/>
    </location>
</feature>
<feature type="region of interest" description="Disordered" evidence="3">
    <location>
        <begin position="164"/>
        <end position="225"/>
    </location>
</feature>
<feature type="region of interest" description="Disordered" evidence="3">
    <location>
        <begin position="538"/>
        <end position="576"/>
    </location>
</feature>
<feature type="compositionally biased region" description="Pro residues" evidence="3">
    <location>
        <begin position="1"/>
        <end position="12"/>
    </location>
</feature>
<feature type="compositionally biased region" description="Low complexity" evidence="3">
    <location>
        <begin position="13"/>
        <end position="24"/>
    </location>
</feature>
<feature type="compositionally biased region" description="Gly residues" evidence="3">
    <location>
        <begin position="25"/>
        <end position="35"/>
    </location>
</feature>
<feature type="compositionally biased region" description="Polar residues" evidence="3">
    <location>
        <begin position="37"/>
        <end position="54"/>
    </location>
</feature>
<feature type="compositionally biased region" description="Low complexity" evidence="3">
    <location>
        <begin position="55"/>
        <end position="66"/>
    </location>
</feature>
<feature type="compositionally biased region" description="Low complexity" evidence="3">
    <location>
        <begin position="178"/>
        <end position="225"/>
    </location>
</feature>
<feature type="modified residue" description="Phosphotyrosine" evidence="1">
    <location>
        <position position="5"/>
    </location>
</feature>
<feature type="modified residue" description="Phosphotyrosine" evidence="1">
    <location>
        <position position="125"/>
    </location>
</feature>
<feature type="modified residue" description="Phosphotyrosine" evidence="1">
    <location>
        <position position="142"/>
    </location>
</feature>
<gene>
    <name evidence="1" type="primary">shep</name>
    <name type="ORF">GD13207</name>
</gene>
<sequence length="576" mass="60463">MHPRYSPAPPPQQQQQMGGPPHQQQGGGGGGGGNMRGPSNAQQLPPQIPRSQNYSNGSSSSAAAAPLTSRSAFPGAPLTASAVALKGALPQRPPAMTSPAAAAAGAALAAGAPYRGAASWTPQGYAPAAAAAAAAVAQQAAYRYTAPLPQPAYAAYTPHTATTPATTTYGQRVPTAASPSNTNSSSSSNTGSQSGTLSTSLSNTTNTNTNMGPNGTVQNQNQQGGEQLSKTNLYIRGLQQGTTDKDLVNMCAQYGTIISTKAILDKTTNKCYGFVDFEQPAFAECAVKGLQGKGVQAQMAKQQEQDPTNLYIANLPPHFKETDLEAMLSKYGQVVSTRILRDQQMNSKGVGFARMESREKCEQIIQMFNGNTIPGAKDPLLVKFADGGPKKKNLFKTPDPNARAWRDVSAEGIPVAYDPTMQQNGVSVNVGTPIGVPYSRFSAPQVGGYPVAGSQWIPGYMMTTQVDDQTSYSPQYMQMAAAPQLGVTSYKPEAVNQVQPRGISMMVSGDTGVPYGTMMPQLATLQIGNSVSHRSPYYAPPPTIIPTMPMTDSEQASTAASPDEAYTQYPHQAAPK</sequence>
<protein>
    <recommendedName>
        <fullName>Protein alan shepard</fullName>
    </recommendedName>
</protein>
<keyword id="KW-0597">Phosphoprotein</keyword>
<keyword id="KW-1185">Reference proteome</keyword>
<keyword id="KW-0677">Repeat</keyword>
<keyword id="KW-0694">RNA-binding</keyword>
<comment type="function">
    <text evidence="1">Has a role in the perception of gravity.</text>
</comment>
<comment type="miscellaneous">
    <text>Named after Alan Bartlett Shepard, Jr. who was the second person and the first American in space and the fifth person to walk on the moon.</text>
</comment>
<name>SHEP_DROSI</name>